<name>DHSD2_ASCSU</name>
<organism evidence="11">
    <name type="scientific">Ascaris suum</name>
    <name type="common">Pig roundworm</name>
    <name type="synonym">Ascaris lumbricoides</name>
    <dbReference type="NCBI Taxonomy" id="6253"/>
    <lineage>
        <taxon>Eukaryota</taxon>
        <taxon>Metazoa</taxon>
        <taxon>Ecdysozoa</taxon>
        <taxon>Nematoda</taxon>
        <taxon>Chromadorea</taxon>
        <taxon>Rhabditida</taxon>
        <taxon>Spirurina</taxon>
        <taxon>Ascaridomorpha</taxon>
        <taxon>Ascaridoidea</taxon>
        <taxon>Ascarididae</taxon>
        <taxon>Ascaris</taxon>
    </lineage>
</organism>
<protein>
    <recommendedName>
        <fullName evidence="4">Succinate dehydrogenase [ubiquinone] cytochrome b small subunit 2</fullName>
        <shortName evidence="8">CybSL</shortName>
    </recommendedName>
    <alternativeName>
        <fullName evidence="2">Cytochrome b558 small subunit</fullName>
    </alternativeName>
    <alternativeName>
        <fullName evidence="9">Succinate-ubiquinone reductase membrane anchor subunit</fullName>
    </alternativeName>
</protein>
<sequence length="141" mass="15699">MSLIRCTTSKALKFRQLLKMAARTSVTTPVSREPFSIEDHSLHFKIERYWAAGMIPLIPTAYFIHTPAMDAVLTVAIVLHVHWGIAGVVSDYARPFVIGDTLARVARASVYIITVILLASLLHFNNSDVGLTKAFEMVWSL</sequence>
<feature type="transit peptide" description="Mitochondrion" evidence="3">
    <location>
        <begin position="1"/>
        <end position="24"/>
    </location>
</feature>
<feature type="chain" id="PRO_0000458189" description="Succinate dehydrogenase [ubiquinone] cytochrome b small subunit 2" evidence="3">
    <location>
        <begin position="25"/>
        <end position="141"/>
    </location>
</feature>
<feature type="topological domain" description="Mitochondrial matrix" evidence="2">
    <location>
        <begin position="25"/>
        <end position="44"/>
    </location>
</feature>
<feature type="transmembrane region" description="Helical" evidence="2">
    <location>
        <begin position="45"/>
        <end position="63"/>
    </location>
</feature>
<feature type="topological domain" description="Mitochondrial intermembrane" evidence="2">
    <location>
        <begin position="64"/>
        <end position="68"/>
    </location>
</feature>
<feature type="transmembrane region" description="Helical" evidence="2">
    <location>
        <begin position="69"/>
        <end position="89"/>
    </location>
</feature>
<feature type="topological domain" description="Mitochondrial matrix" evidence="2">
    <location>
        <begin position="90"/>
        <end position="104"/>
    </location>
</feature>
<feature type="transmembrane region" description="Helical" evidence="2">
    <location>
        <begin position="105"/>
        <end position="126"/>
    </location>
</feature>
<feature type="topological domain" description="Mitochondrial intermembrane" evidence="2">
    <location>
        <begin position="127"/>
        <end position="141"/>
    </location>
</feature>
<feature type="binding site" description="axial binding residue" evidence="2">
    <location>
        <position position="80"/>
    </location>
    <ligand>
        <name>heme b</name>
        <dbReference type="ChEBI" id="CHEBI:60344"/>
        <note>ligand shared with large subunit</note>
    </ligand>
    <ligandPart>
        <name>Fe</name>
        <dbReference type="ChEBI" id="CHEBI:18248"/>
    </ligandPart>
</feature>
<feature type="binding site" evidence="2">
    <location>
        <position position="92"/>
    </location>
    <ligand>
        <name>a ubiquinone</name>
        <dbReference type="ChEBI" id="CHEBI:16389"/>
        <note>ligand shared with IP and large subunit</note>
    </ligand>
</feature>
<gene>
    <name evidence="8" type="primary">SDHD2</name>
</gene>
<comment type="function">
    <text evidence="5 6 7">Membrane-bound small subunit (CybS) of the mitochondrial electron transport chain complex II, which together with the membrane-bound large subunit (CybL), anchor the catalytic subunits to the inner mitochondria membrane (PubMed:12742584, PubMed:17933581, PubMed:8435436). During the free-living egg-larvae stages, which occur in an aerobic environment, complex II acts as a succinate dehydrogenase by transferring electrons from succinate to ubiquinone (PubMed:12742584, PubMed:17933581, PubMed:8435436).</text>
</comment>
<comment type="cofactor">
    <cofactor evidence="1">
        <name>heme b</name>
        <dbReference type="ChEBI" id="CHEBI:60344"/>
    </cofactor>
    <text evidence="2">The heme b is bound between the two transmembrane subunits CybS and CybL.</text>
</comment>
<comment type="pathway">
    <text evidence="5">Carbohydrate metabolism; tricarboxylic acid cycle; fumarate from succinate (eukaryal route): step 1/1.</text>
</comment>
<comment type="subunit">
    <text evidence="5 6 7">Component of the mitochondrial electron transport chain complex II composed of four subunits: a flavoprotein (Fp), an iron-sulfur protein (Ip), and a large cytochrome b (CybL) subunit and a small cytochrome b (CybS) subunit (PubMed:12742584, PubMed:17933581, PubMed:8435436). There are 2 developmental stage-specific forms of complex II which have the Ip and CybL subunits in common (PubMed:12742584, PubMed:17933581). Complex II from the free-living larvae (aerobic environment) acts as a succinate dehydrogenase and is composed of the common subunit Ip and CybL and the stage specific subunits FpL and CybSL (PubMed:12742584, PubMed:17933581). Complex II from parasitic larvae and adults (anaerobic environment) acts as a fumarate reductase and is composed of the common subunit Ip and CybL and the stage specific subunits FpA and CybSA (PubMed:12742584, PubMed:17933581).</text>
</comment>
<comment type="subcellular location">
    <subcellularLocation>
        <location evidence="4 5 6 7">Mitochondrion inner membrane</location>
        <topology evidence="4">Multi-pass membrane protein</topology>
    </subcellularLocation>
</comment>
<comment type="developmental stage">
    <text evidence="5 6 7">Expressed in L3 larvae (at protein level) (PubMed:12742584, PubMed:17933581, PubMed:8435436). Expressed at low levels in host lung L3 larvae (at protein level) (PubMed:17933581). Not expressed in adults (at protein level) (PubMed:12742584, PubMed:17933581).</text>
</comment>
<comment type="similarity">
    <text evidence="4">Belongs to the CybS family.</text>
</comment>
<dbReference type="EMBL" id="JI176068">
    <property type="protein sequence ID" value="ADY47347.1"/>
    <property type="molecule type" value="mRNA"/>
</dbReference>
<dbReference type="EMBL" id="AB072354">
    <property type="protein sequence ID" value="BAB84192.1"/>
    <property type="molecule type" value="mRNA"/>
</dbReference>
<dbReference type="SMR" id="Q8WSR2"/>
<dbReference type="SABIO-RK" id="Q8WSR2"/>
<dbReference type="UniPathway" id="UPA00223">
    <property type="reaction ID" value="UER01006"/>
</dbReference>
<dbReference type="GO" id="GO:0098796">
    <property type="term" value="C:membrane protein complex"/>
    <property type="evidence" value="ECO:0007669"/>
    <property type="project" value="UniProtKB-ARBA"/>
</dbReference>
<dbReference type="GO" id="GO:0005743">
    <property type="term" value="C:mitochondrial inner membrane"/>
    <property type="evidence" value="ECO:0007669"/>
    <property type="project" value="UniProtKB-SubCell"/>
</dbReference>
<dbReference type="GO" id="GO:0020037">
    <property type="term" value="F:heme binding"/>
    <property type="evidence" value="ECO:0007669"/>
    <property type="project" value="TreeGrafter"/>
</dbReference>
<dbReference type="GO" id="GO:0046872">
    <property type="term" value="F:metal ion binding"/>
    <property type="evidence" value="ECO:0007669"/>
    <property type="project" value="UniProtKB-KW"/>
</dbReference>
<dbReference type="GO" id="GO:0048039">
    <property type="term" value="F:ubiquinone binding"/>
    <property type="evidence" value="ECO:0007669"/>
    <property type="project" value="TreeGrafter"/>
</dbReference>
<dbReference type="GO" id="GO:0006121">
    <property type="term" value="P:mitochondrial electron transport, succinate to ubiquinone"/>
    <property type="evidence" value="ECO:0007669"/>
    <property type="project" value="TreeGrafter"/>
</dbReference>
<dbReference type="GO" id="GO:0006099">
    <property type="term" value="P:tricarboxylic acid cycle"/>
    <property type="evidence" value="ECO:0007669"/>
    <property type="project" value="UniProtKB-UniPathway"/>
</dbReference>
<dbReference type="CDD" id="cd03496">
    <property type="entry name" value="SQR_TypeC_CybS"/>
    <property type="match status" value="1"/>
</dbReference>
<dbReference type="Gene3D" id="1.20.1300.10">
    <property type="entry name" value="Fumarate reductase/succinate dehydrogenase, transmembrane subunit"/>
    <property type="match status" value="1"/>
</dbReference>
<dbReference type="InterPro" id="IPR007992">
    <property type="entry name" value="CybS"/>
</dbReference>
<dbReference type="InterPro" id="IPR034804">
    <property type="entry name" value="SQR/QFR_C/D"/>
</dbReference>
<dbReference type="PANTHER" id="PTHR13337">
    <property type="entry name" value="SUCCINATE DEHYDROGENASE"/>
    <property type="match status" value="1"/>
</dbReference>
<dbReference type="PANTHER" id="PTHR13337:SF2">
    <property type="entry name" value="SUCCINATE DEHYDROGENASE [UBIQUINONE] CYTOCHROME B SMALL SUBUNIT, MITOCHONDRIAL"/>
    <property type="match status" value="1"/>
</dbReference>
<dbReference type="Pfam" id="PF05328">
    <property type="entry name" value="CybS"/>
    <property type="match status" value="1"/>
</dbReference>
<proteinExistence type="evidence at protein level"/>
<keyword id="KW-0249">Electron transport</keyword>
<keyword id="KW-0349">Heme</keyword>
<keyword id="KW-0408">Iron</keyword>
<keyword id="KW-0472">Membrane</keyword>
<keyword id="KW-0479">Metal-binding</keyword>
<keyword id="KW-0496">Mitochondrion</keyword>
<keyword id="KW-0999">Mitochondrion inner membrane</keyword>
<keyword id="KW-0809">Transit peptide</keyword>
<keyword id="KW-0812">Transmembrane</keyword>
<keyword id="KW-1133">Transmembrane helix</keyword>
<keyword id="KW-0813">Transport</keyword>
<keyword id="KW-0816">Tricarboxylic acid cycle</keyword>
<keyword id="KW-0830">Ubiquinone</keyword>
<accession>Q8WSR2</accession>
<reference evidence="11" key="1">
    <citation type="submission" date="2001-09" db="EMBL/GenBank/DDBJ databases">
        <title>Novel properties of anchor subunits in succinate-ubiquinone reductase of Ascaris suum L3 larvae.</title>
        <authorList>
            <person name="Kita K."/>
        </authorList>
    </citation>
    <scope>NUCLEOTIDE SEQUENCE [MRNA]</scope>
</reference>
<reference evidence="10" key="2">
    <citation type="journal article" date="2011" name="Genome Res.">
        <title>Deep small RNA sequencing from the nematode Ascaris reveals conservation, functional diversification, and novel developmental profiles.</title>
        <authorList>
            <person name="Wang J."/>
            <person name="Czech B."/>
            <person name="Crunk A."/>
            <person name="Wallace A."/>
            <person name="Mitreva M."/>
            <person name="Hannon G.J."/>
            <person name="Davis R.E."/>
        </authorList>
    </citation>
    <scope>NUCLEOTIDE SEQUENCE [MRNA]</scope>
</reference>
<reference evidence="9" key="3">
    <citation type="journal article" date="1993" name="Biochim. Biophys. Acta">
        <title>Developmental changes in the respiratory chain of Ascaris mitochondria.</title>
        <authorList>
            <person name="Takamiya S."/>
            <person name="Kita K."/>
            <person name="Wang H."/>
            <person name="Weinstein P.P."/>
            <person name="Hiraishi A."/>
            <person name="Oya H."/>
            <person name="Aoki T."/>
        </authorList>
    </citation>
    <scope>FUNCTION</scope>
    <scope>IDENTIFICATION IN THE MITOCHONDRIAL RESPIRATORY CHAIN COMPLEX II</scope>
    <scope>SUBCELLULAR LOCATION</scope>
    <scope>DEVELOPMENTAL STAGE</scope>
</reference>
<reference evidence="9" key="4">
    <citation type="journal article" date="2003" name="Mol. Biochem. Parasitol.">
        <title>Isolation and characterization of the stage-specific cytochrome b small subunit (CybS) of Ascaris suum complex II from the aerobic respiratory chain of larval mitochondria.</title>
        <authorList>
            <person name="Amino H."/>
            <person name="Osanai A."/>
            <person name="Miyadera H."/>
            <person name="Shinjyo N."/>
            <person name="Tomitsuka E."/>
            <person name="Taka H."/>
            <person name="Mineki R."/>
            <person name="Murayama K."/>
            <person name="Takamiya S."/>
            <person name="Aoki T."/>
            <person name="Miyoshi H."/>
            <person name="Sakamoto K."/>
            <person name="Kojima S."/>
            <person name="Kita K."/>
        </authorList>
    </citation>
    <scope>FUNCTION</scope>
    <scope>PATHWAY</scope>
    <scope>IDENTIFICATION IN THE MITOCHONDRIAL RESPIRATORY CHAIN COMPLEX II</scope>
    <scope>SUBCELLULAR LOCATION</scope>
    <scope>DEVELOPMENTAL STAGE</scope>
</reference>
<reference evidence="9" key="5">
    <citation type="journal article" date="2008" name="Parasitol. Int.">
        <title>Change of subunit composition of mitochondrial complex II (succinate-ubiquinone reductase/quinol-fumarate reductase) in Ascaris suum during the migration in the experimental host.</title>
        <authorList>
            <person name="Iwata F."/>
            <person name="Shinjyo N."/>
            <person name="Amino H."/>
            <person name="Sakamoto K."/>
            <person name="Islam M.K."/>
            <person name="Tsuji N."/>
            <person name="Kita K."/>
        </authorList>
    </citation>
    <scope>FUNCTION</scope>
    <scope>IDENTIFICATION IN THE MITOCHONDRIAL RESPIRATORY CHAIN COMPLEX II</scope>
    <scope>SUBCELLULAR LOCATION</scope>
    <scope>DEVELOPMENTAL STAGE</scope>
</reference>
<evidence type="ECO:0000250" key="1">
    <source>
        <dbReference type="UniProtKB" id="D0VWV4"/>
    </source>
</evidence>
<evidence type="ECO:0000250" key="2">
    <source>
        <dbReference type="UniProtKB" id="P92507"/>
    </source>
</evidence>
<evidence type="ECO:0000255" key="3"/>
<evidence type="ECO:0000255" key="4">
    <source>
        <dbReference type="RuleBase" id="RU364031"/>
    </source>
</evidence>
<evidence type="ECO:0000269" key="5">
    <source>
    </source>
</evidence>
<evidence type="ECO:0000269" key="6">
    <source>
    </source>
</evidence>
<evidence type="ECO:0000269" key="7">
    <source>
    </source>
</evidence>
<evidence type="ECO:0000303" key="8">
    <source>
    </source>
</evidence>
<evidence type="ECO:0000305" key="9"/>
<evidence type="ECO:0000312" key="10">
    <source>
        <dbReference type="EMBL" id="ADY47347.1"/>
    </source>
</evidence>
<evidence type="ECO:0000312" key="11">
    <source>
        <dbReference type="EMBL" id="BAB84192.1"/>
    </source>
</evidence>